<keyword id="KW-0012">Acyltransferase</keyword>
<keyword id="KW-0677">Repeat</keyword>
<keyword id="KW-0808">Transferase</keyword>
<gene>
    <name type="ordered locus">SAR2635</name>
</gene>
<organism>
    <name type="scientific">Staphylococcus aureus (strain MRSA252)</name>
    <dbReference type="NCBI Taxonomy" id="282458"/>
    <lineage>
        <taxon>Bacteria</taxon>
        <taxon>Bacillati</taxon>
        <taxon>Bacillota</taxon>
        <taxon>Bacilli</taxon>
        <taxon>Bacillales</taxon>
        <taxon>Staphylococcaceae</taxon>
        <taxon>Staphylococcus</taxon>
    </lineage>
</organism>
<dbReference type="EC" id="2.3.1.-"/>
<dbReference type="EMBL" id="BX571856">
    <property type="protein sequence ID" value="CAG41614.1"/>
    <property type="molecule type" value="Genomic_DNA"/>
</dbReference>
<dbReference type="RefSeq" id="WP_000136482.1">
    <property type="nucleotide sequence ID" value="NC_002952.2"/>
</dbReference>
<dbReference type="SMR" id="Q6GDP3"/>
<dbReference type="KEGG" id="sar:SAR2635"/>
<dbReference type="HOGENOM" id="CLU_051638_3_0_9"/>
<dbReference type="Proteomes" id="UP000000596">
    <property type="component" value="Chromosome"/>
</dbReference>
<dbReference type="GO" id="GO:0008870">
    <property type="term" value="F:galactoside O-acetyltransferase activity"/>
    <property type="evidence" value="ECO:0007669"/>
    <property type="project" value="TreeGrafter"/>
</dbReference>
<dbReference type="CDD" id="cd03357">
    <property type="entry name" value="LbH_MAT_GAT"/>
    <property type="match status" value="1"/>
</dbReference>
<dbReference type="FunFam" id="2.160.10.10:FF:000008">
    <property type="entry name" value="Maltose O-acetyltransferase"/>
    <property type="match status" value="1"/>
</dbReference>
<dbReference type="Gene3D" id="2.160.10.10">
    <property type="entry name" value="Hexapeptide repeat proteins"/>
    <property type="match status" value="1"/>
</dbReference>
<dbReference type="InterPro" id="IPR001451">
    <property type="entry name" value="Hexapep"/>
</dbReference>
<dbReference type="InterPro" id="IPR039369">
    <property type="entry name" value="LacA-like"/>
</dbReference>
<dbReference type="InterPro" id="IPR024688">
    <property type="entry name" value="Mac_dom"/>
</dbReference>
<dbReference type="InterPro" id="IPR011004">
    <property type="entry name" value="Trimer_LpxA-like_sf"/>
</dbReference>
<dbReference type="PANTHER" id="PTHR43017:SF1">
    <property type="entry name" value="ACETYLTRANSFERASE YJL218W-RELATED"/>
    <property type="match status" value="1"/>
</dbReference>
<dbReference type="PANTHER" id="PTHR43017">
    <property type="entry name" value="GALACTOSIDE O-ACETYLTRANSFERASE"/>
    <property type="match status" value="1"/>
</dbReference>
<dbReference type="Pfam" id="PF00132">
    <property type="entry name" value="Hexapep"/>
    <property type="match status" value="1"/>
</dbReference>
<dbReference type="Pfam" id="PF14602">
    <property type="entry name" value="Hexapep_2"/>
    <property type="match status" value="1"/>
</dbReference>
<dbReference type="Pfam" id="PF12464">
    <property type="entry name" value="Mac"/>
    <property type="match status" value="1"/>
</dbReference>
<dbReference type="SMART" id="SM01266">
    <property type="entry name" value="Mac"/>
    <property type="match status" value="1"/>
</dbReference>
<dbReference type="SUPFAM" id="SSF51161">
    <property type="entry name" value="Trimeric LpxA-like enzymes"/>
    <property type="match status" value="1"/>
</dbReference>
<protein>
    <recommendedName>
        <fullName>Putative acetyltransferase SAR2635</fullName>
        <ecNumber>2.3.1.-</ecNumber>
    </recommendedName>
</protein>
<sequence>MTEKEKMLAEKWYDANFDQDLINERARAKDICFELNHTKPSDKNKRKELIDELFQTTTDNVSISIPFDTDYGWNVKLGKNVYVNTNCYFMDGGQITIGDNVFIGPNCGFYTATHPLNFHHRNEGFEKAGPINIGSNTWFGGHVAVLPGVTIGEGSVIGAGSVVTKDIPPHSLAVGNPCKVVRKIDNEVPSEALNDETLN</sequence>
<evidence type="ECO:0000305" key="1"/>
<name>ATRF2_STAAR</name>
<accession>Q6GDP3</accession>
<feature type="chain" id="PRO_0000068755" description="Putative acetyltransferase SAR2635">
    <location>
        <begin position="1"/>
        <end position="199"/>
    </location>
</feature>
<proteinExistence type="inferred from homology"/>
<reference key="1">
    <citation type="journal article" date="2004" name="Proc. Natl. Acad. Sci. U.S.A.">
        <title>Complete genomes of two clinical Staphylococcus aureus strains: evidence for the rapid evolution of virulence and drug resistance.</title>
        <authorList>
            <person name="Holden M.T.G."/>
            <person name="Feil E.J."/>
            <person name="Lindsay J.A."/>
            <person name="Peacock S.J."/>
            <person name="Day N.P.J."/>
            <person name="Enright M.C."/>
            <person name="Foster T.J."/>
            <person name="Moore C.E."/>
            <person name="Hurst L."/>
            <person name="Atkin R."/>
            <person name="Barron A."/>
            <person name="Bason N."/>
            <person name="Bentley S.D."/>
            <person name="Chillingworth C."/>
            <person name="Chillingworth T."/>
            <person name="Churcher C."/>
            <person name="Clark L."/>
            <person name="Corton C."/>
            <person name="Cronin A."/>
            <person name="Doggett J."/>
            <person name="Dowd L."/>
            <person name="Feltwell T."/>
            <person name="Hance Z."/>
            <person name="Harris B."/>
            <person name="Hauser H."/>
            <person name="Holroyd S."/>
            <person name="Jagels K."/>
            <person name="James K.D."/>
            <person name="Lennard N."/>
            <person name="Line A."/>
            <person name="Mayes R."/>
            <person name="Moule S."/>
            <person name="Mungall K."/>
            <person name="Ormond D."/>
            <person name="Quail M.A."/>
            <person name="Rabbinowitsch E."/>
            <person name="Rutherford K.M."/>
            <person name="Sanders M."/>
            <person name="Sharp S."/>
            <person name="Simmonds M."/>
            <person name="Stevens K."/>
            <person name="Whitehead S."/>
            <person name="Barrell B.G."/>
            <person name="Spratt B.G."/>
            <person name="Parkhill J."/>
        </authorList>
    </citation>
    <scope>NUCLEOTIDE SEQUENCE [LARGE SCALE GENOMIC DNA]</scope>
    <source>
        <strain>MRSA252</strain>
    </source>
</reference>
<comment type="similarity">
    <text evidence="1">Belongs to the transferase hexapeptide repeat family.</text>
</comment>